<sequence length="848" mass="97209">MNLESTATSAEYWSDLADALNTPMMKQFLAIKKDFPDTILFFRMGDFYEMFLEDAKIASSILDIALTKRQNAVPMCGIPYHSKDNYISRLLNAGKKIAICEQSKPEEAGSKLMTRDVVRIITPGTVIEENLLSGFQNNYLAVLHLKKSLIYFAIADFSTGEVFYSSVSVTGLERLIAELEKFKPSEICVPKSEHTFFQELEYFKNREFTVLKNQIETSEKDSFQVLSKYLNEYIRETYRDNKLVLREPKILSSGKFLEMDRETIRNLELVENEKEKNNTLYSIFNFCNTAKGKRLLKQRILFPECDPVVLYSRWEKQDILLKTVLAPYITALKDFGDLERILTRFRGNHAYPRDFRSLLNSISSGIKLKEELEKVSYPFLIPIEELKKISDFIQERLHPGDDLPVILGNGIFLKKGFSQKLDQAREAGVKGKDWILDLETKEKKRTGLNTLKIRYNKIVGYFIEISRAQAEQAPKDYLKKQTLVGSERFTMPKLEEIERTILEADEIIQEIERTEFNRMVEEVLKFSSSLLSFSEEIGDLDFQISLLTAKDKFGWIRPKLSEDRSLDLNDSRHPVVEATLPPGQEFIPNSVYLDTQDKAIAVLTGPNMAGKSTFMRQIALNQILFQIGAFVPAKSAKLPIVDKLFTRIGAGDNLTAGESTFFVEMKETANILNHYTEDSLILFDEVGRGTSTYDGMSIAWSILEYLSSLSVRPKTIFATHYHELTELSRLGGIFNLYLETLEKEDRVLFLRKVKVGKAKKSFGIYVAKIAGVPEPIVKRAAELLTDLESKKKEIKIQEAQPTLFTEPETKNFNSQTEESILKLKLEEMTPIEALKTLEDFQKKLRKQK</sequence>
<gene>
    <name evidence="1" type="primary">mutS</name>
    <name type="ordered locus">LIC_11774</name>
</gene>
<organism>
    <name type="scientific">Leptospira interrogans serogroup Icterohaemorrhagiae serovar copenhageni (strain Fiocruz L1-130)</name>
    <dbReference type="NCBI Taxonomy" id="267671"/>
    <lineage>
        <taxon>Bacteria</taxon>
        <taxon>Pseudomonadati</taxon>
        <taxon>Spirochaetota</taxon>
        <taxon>Spirochaetia</taxon>
        <taxon>Leptospirales</taxon>
        <taxon>Leptospiraceae</taxon>
        <taxon>Leptospira</taxon>
    </lineage>
</organism>
<protein>
    <recommendedName>
        <fullName evidence="1">DNA mismatch repair protein MutS</fullName>
    </recommendedName>
</protein>
<reference key="1">
    <citation type="journal article" date="2004" name="J. Bacteriol.">
        <title>Comparative genomics of two Leptospira interrogans serovars reveals novel insights into physiology and pathogenesis.</title>
        <authorList>
            <person name="Nascimento A.L.T.O."/>
            <person name="Ko A.I."/>
            <person name="Martins E.A.L."/>
            <person name="Monteiro-Vitorello C.B."/>
            <person name="Ho P.L."/>
            <person name="Haake D.A."/>
            <person name="Verjovski-Almeida S."/>
            <person name="Hartskeerl R.A."/>
            <person name="Marques M.V."/>
            <person name="Oliveira M.C."/>
            <person name="Menck C.F.M."/>
            <person name="Leite L.C.C."/>
            <person name="Carrer H."/>
            <person name="Coutinho L.L."/>
            <person name="Degrave W.M."/>
            <person name="Dellagostin O.A."/>
            <person name="El-Dorry H."/>
            <person name="Ferro E.S."/>
            <person name="Ferro M.I.T."/>
            <person name="Furlan L.R."/>
            <person name="Gamberini M."/>
            <person name="Giglioti E.A."/>
            <person name="Goes-Neto A."/>
            <person name="Goldman G.H."/>
            <person name="Goldman M.H.S."/>
            <person name="Harakava R."/>
            <person name="Jeronimo S.M.B."/>
            <person name="Junqueira-de-Azevedo I.L.M."/>
            <person name="Kimura E.T."/>
            <person name="Kuramae E.E."/>
            <person name="Lemos E.G.M."/>
            <person name="Lemos M.V.F."/>
            <person name="Marino C.L."/>
            <person name="Nunes L.R."/>
            <person name="de Oliveira R.C."/>
            <person name="Pereira G.G."/>
            <person name="Reis M.S."/>
            <person name="Schriefer A."/>
            <person name="Siqueira W.J."/>
            <person name="Sommer P."/>
            <person name="Tsai S.M."/>
            <person name="Simpson A.J.G."/>
            <person name="Ferro J.A."/>
            <person name="Camargo L.E.A."/>
            <person name="Kitajima J.P."/>
            <person name="Setubal J.C."/>
            <person name="Van Sluys M.A."/>
        </authorList>
    </citation>
    <scope>NUCLEOTIDE SEQUENCE [LARGE SCALE GENOMIC DNA]</scope>
    <source>
        <strain>Fiocruz L1-130</strain>
    </source>
</reference>
<comment type="function">
    <text evidence="1">This protein is involved in the repair of mismatches in DNA. It is possible that it carries out the mismatch recognition step. This protein has a weak ATPase activity.</text>
</comment>
<comment type="similarity">
    <text evidence="1">Belongs to the DNA mismatch repair MutS family.</text>
</comment>
<feature type="chain" id="PRO_0000115106" description="DNA mismatch repair protein MutS">
    <location>
        <begin position="1"/>
        <end position="848"/>
    </location>
</feature>
<feature type="binding site" evidence="1">
    <location>
        <begin position="605"/>
        <end position="612"/>
    </location>
    <ligand>
        <name>ATP</name>
        <dbReference type="ChEBI" id="CHEBI:30616"/>
    </ligand>
</feature>
<accession>P61669</accession>
<keyword id="KW-0067">ATP-binding</keyword>
<keyword id="KW-0227">DNA damage</keyword>
<keyword id="KW-0234">DNA repair</keyword>
<keyword id="KW-0238">DNA-binding</keyword>
<keyword id="KW-0547">Nucleotide-binding</keyword>
<name>MUTS_LEPIC</name>
<dbReference type="EMBL" id="AE016823">
    <property type="protein sequence ID" value="AAS70363.1"/>
    <property type="molecule type" value="Genomic_DNA"/>
</dbReference>
<dbReference type="RefSeq" id="WP_001047644.1">
    <property type="nucleotide sequence ID" value="NC_005823.1"/>
</dbReference>
<dbReference type="SMR" id="P61669"/>
<dbReference type="GeneID" id="61141672"/>
<dbReference type="KEGG" id="lic:LIC_11774"/>
<dbReference type="HOGENOM" id="CLU_002472_3_1_12"/>
<dbReference type="Proteomes" id="UP000007037">
    <property type="component" value="Chromosome I"/>
</dbReference>
<dbReference type="GO" id="GO:0005829">
    <property type="term" value="C:cytosol"/>
    <property type="evidence" value="ECO:0007669"/>
    <property type="project" value="TreeGrafter"/>
</dbReference>
<dbReference type="GO" id="GO:0005524">
    <property type="term" value="F:ATP binding"/>
    <property type="evidence" value="ECO:0007669"/>
    <property type="project" value="UniProtKB-UniRule"/>
</dbReference>
<dbReference type="GO" id="GO:0140664">
    <property type="term" value="F:ATP-dependent DNA damage sensor activity"/>
    <property type="evidence" value="ECO:0007669"/>
    <property type="project" value="InterPro"/>
</dbReference>
<dbReference type="GO" id="GO:0003684">
    <property type="term" value="F:damaged DNA binding"/>
    <property type="evidence" value="ECO:0007669"/>
    <property type="project" value="UniProtKB-UniRule"/>
</dbReference>
<dbReference type="GO" id="GO:0030983">
    <property type="term" value="F:mismatched DNA binding"/>
    <property type="evidence" value="ECO:0007669"/>
    <property type="project" value="InterPro"/>
</dbReference>
<dbReference type="GO" id="GO:0006298">
    <property type="term" value="P:mismatch repair"/>
    <property type="evidence" value="ECO:0007669"/>
    <property type="project" value="UniProtKB-UniRule"/>
</dbReference>
<dbReference type="FunFam" id="3.40.1170.10:FF:000001">
    <property type="entry name" value="DNA mismatch repair protein MutS"/>
    <property type="match status" value="1"/>
</dbReference>
<dbReference type="FunFam" id="3.40.50.300:FF:001974">
    <property type="entry name" value="DNA mismatch repair protein MutS"/>
    <property type="match status" value="1"/>
</dbReference>
<dbReference type="Gene3D" id="1.10.1420.10">
    <property type="match status" value="2"/>
</dbReference>
<dbReference type="Gene3D" id="3.40.1170.10">
    <property type="entry name" value="DNA repair protein MutS, domain I"/>
    <property type="match status" value="1"/>
</dbReference>
<dbReference type="Gene3D" id="3.30.420.110">
    <property type="entry name" value="MutS, connector domain"/>
    <property type="match status" value="1"/>
</dbReference>
<dbReference type="Gene3D" id="3.40.50.300">
    <property type="entry name" value="P-loop containing nucleotide triphosphate hydrolases"/>
    <property type="match status" value="1"/>
</dbReference>
<dbReference type="HAMAP" id="MF_00096">
    <property type="entry name" value="MutS"/>
    <property type="match status" value="1"/>
</dbReference>
<dbReference type="InterPro" id="IPR005748">
    <property type="entry name" value="DNA_mismatch_repair_MutS"/>
</dbReference>
<dbReference type="InterPro" id="IPR007695">
    <property type="entry name" value="DNA_mismatch_repair_MutS-lik_N"/>
</dbReference>
<dbReference type="InterPro" id="IPR017261">
    <property type="entry name" value="DNA_mismatch_repair_MutS/MSH"/>
</dbReference>
<dbReference type="InterPro" id="IPR000432">
    <property type="entry name" value="DNA_mismatch_repair_MutS_C"/>
</dbReference>
<dbReference type="InterPro" id="IPR007861">
    <property type="entry name" value="DNA_mismatch_repair_MutS_clamp"/>
</dbReference>
<dbReference type="InterPro" id="IPR007696">
    <property type="entry name" value="DNA_mismatch_repair_MutS_core"/>
</dbReference>
<dbReference type="InterPro" id="IPR016151">
    <property type="entry name" value="DNA_mismatch_repair_MutS_N"/>
</dbReference>
<dbReference type="InterPro" id="IPR036187">
    <property type="entry name" value="DNA_mismatch_repair_MutS_sf"/>
</dbReference>
<dbReference type="InterPro" id="IPR007860">
    <property type="entry name" value="DNA_mmatch_repair_MutS_con_dom"/>
</dbReference>
<dbReference type="InterPro" id="IPR045076">
    <property type="entry name" value="MutS"/>
</dbReference>
<dbReference type="InterPro" id="IPR036678">
    <property type="entry name" value="MutS_con_dom_sf"/>
</dbReference>
<dbReference type="InterPro" id="IPR027417">
    <property type="entry name" value="P-loop_NTPase"/>
</dbReference>
<dbReference type="NCBIfam" id="TIGR01070">
    <property type="entry name" value="mutS1"/>
    <property type="match status" value="1"/>
</dbReference>
<dbReference type="NCBIfam" id="NF003810">
    <property type="entry name" value="PRK05399.1"/>
    <property type="match status" value="1"/>
</dbReference>
<dbReference type="PANTHER" id="PTHR11361:SF34">
    <property type="entry name" value="DNA MISMATCH REPAIR PROTEIN MSH1, MITOCHONDRIAL"/>
    <property type="match status" value="1"/>
</dbReference>
<dbReference type="PANTHER" id="PTHR11361">
    <property type="entry name" value="DNA MISMATCH REPAIR PROTEIN MUTS FAMILY MEMBER"/>
    <property type="match status" value="1"/>
</dbReference>
<dbReference type="Pfam" id="PF01624">
    <property type="entry name" value="MutS_I"/>
    <property type="match status" value="1"/>
</dbReference>
<dbReference type="Pfam" id="PF05188">
    <property type="entry name" value="MutS_II"/>
    <property type="match status" value="1"/>
</dbReference>
<dbReference type="Pfam" id="PF05192">
    <property type="entry name" value="MutS_III"/>
    <property type="match status" value="1"/>
</dbReference>
<dbReference type="Pfam" id="PF05190">
    <property type="entry name" value="MutS_IV"/>
    <property type="match status" value="1"/>
</dbReference>
<dbReference type="Pfam" id="PF00488">
    <property type="entry name" value="MutS_V"/>
    <property type="match status" value="1"/>
</dbReference>
<dbReference type="PIRSF" id="PIRSF037677">
    <property type="entry name" value="DNA_mis_repair_Msh6"/>
    <property type="match status" value="1"/>
</dbReference>
<dbReference type="SMART" id="SM00534">
    <property type="entry name" value="MUTSac"/>
    <property type="match status" value="1"/>
</dbReference>
<dbReference type="SMART" id="SM00533">
    <property type="entry name" value="MUTSd"/>
    <property type="match status" value="1"/>
</dbReference>
<dbReference type="SUPFAM" id="SSF55271">
    <property type="entry name" value="DNA repair protein MutS, domain I"/>
    <property type="match status" value="1"/>
</dbReference>
<dbReference type="SUPFAM" id="SSF53150">
    <property type="entry name" value="DNA repair protein MutS, domain II"/>
    <property type="match status" value="1"/>
</dbReference>
<dbReference type="SUPFAM" id="SSF48334">
    <property type="entry name" value="DNA repair protein MutS, domain III"/>
    <property type="match status" value="1"/>
</dbReference>
<dbReference type="SUPFAM" id="SSF52540">
    <property type="entry name" value="P-loop containing nucleoside triphosphate hydrolases"/>
    <property type="match status" value="1"/>
</dbReference>
<dbReference type="PROSITE" id="PS00486">
    <property type="entry name" value="DNA_MISMATCH_REPAIR_2"/>
    <property type="match status" value="1"/>
</dbReference>
<evidence type="ECO:0000255" key="1">
    <source>
        <dbReference type="HAMAP-Rule" id="MF_00096"/>
    </source>
</evidence>
<proteinExistence type="inferred from homology"/>